<proteinExistence type="inferred from homology"/>
<evidence type="ECO:0000255" key="1">
    <source>
        <dbReference type="HAMAP-Rule" id="MF_00122"/>
    </source>
</evidence>
<keyword id="KW-0067">ATP-binding</keyword>
<keyword id="KW-0436">Ligase</keyword>
<keyword id="KW-0547">Nucleotide-binding</keyword>
<keyword id="KW-0648">Protein biosynthesis</keyword>
<keyword id="KW-1185">Reference proteome</keyword>
<reference key="1">
    <citation type="submission" date="2006-05" db="EMBL/GenBank/DDBJ databases">
        <title>Complete sequence of chromosome of Silicibacter sp. TM1040.</title>
        <authorList>
            <consortium name="US DOE Joint Genome Institute"/>
            <person name="Copeland A."/>
            <person name="Lucas S."/>
            <person name="Lapidus A."/>
            <person name="Barry K."/>
            <person name="Detter J.C."/>
            <person name="Glavina del Rio T."/>
            <person name="Hammon N."/>
            <person name="Israni S."/>
            <person name="Dalin E."/>
            <person name="Tice H."/>
            <person name="Pitluck S."/>
            <person name="Brettin T."/>
            <person name="Bruce D."/>
            <person name="Han C."/>
            <person name="Tapia R."/>
            <person name="Goodwin L."/>
            <person name="Thompson L.S."/>
            <person name="Gilna P."/>
            <person name="Schmutz J."/>
            <person name="Larimer F."/>
            <person name="Land M."/>
            <person name="Hauser L."/>
            <person name="Kyrpides N."/>
            <person name="Kim E."/>
            <person name="Belas R."/>
            <person name="Moran M.A."/>
            <person name="Buchan A."/>
            <person name="Gonzalez J.M."/>
            <person name="Schell M.A."/>
            <person name="Sun F."/>
            <person name="Richardson P."/>
        </authorList>
    </citation>
    <scope>NUCLEOTIDE SEQUENCE [LARGE SCALE GENOMIC DNA]</scope>
    <source>
        <strain>TM1040</strain>
    </source>
</reference>
<sequence>MSIDQSTAAKVAKLARIKVEEDALPALAEEFNTILGFIEQLNEVDVEGVEPMTSVTPQRLKRREDVVTDGNQQDKVLANAPDAREGFFAVPKVVE</sequence>
<name>GATC_RUEST</name>
<protein>
    <recommendedName>
        <fullName evidence="1">Aspartyl/glutamyl-tRNA(Asn/Gln) amidotransferase subunit C</fullName>
        <shortName evidence="1">Asp/Glu-ADT subunit C</shortName>
        <ecNumber evidence="1">6.3.5.-</ecNumber>
    </recommendedName>
</protein>
<organism>
    <name type="scientific">Ruegeria sp. (strain TM1040)</name>
    <name type="common">Silicibacter sp.</name>
    <dbReference type="NCBI Taxonomy" id="292414"/>
    <lineage>
        <taxon>Bacteria</taxon>
        <taxon>Pseudomonadati</taxon>
        <taxon>Pseudomonadota</taxon>
        <taxon>Alphaproteobacteria</taxon>
        <taxon>Rhodobacterales</taxon>
        <taxon>Roseobacteraceae</taxon>
        <taxon>Ruegeria</taxon>
    </lineage>
</organism>
<dbReference type="EC" id="6.3.5.-" evidence="1"/>
<dbReference type="EMBL" id="CP000377">
    <property type="protein sequence ID" value="ABF64652.1"/>
    <property type="molecule type" value="Genomic_DNA"/>
</dbReference>
<dbReference type="RefSeq" id="WP_005679979.1">
    <property type="nucleotide sequence ID" value="NC_008044.1"/>
</dbReference>
<dbReference type="SMR" id="Q1GFB4"/>
<dbReference type="STRING" id="292414.TM1040_1919"/>
<dbReference type="GeneID" id="28249067"/>
<dbReference type="KEGG" id="sit:TM1040_1919"/>
<dbReference type="eggNOG" id="COG0721">
    <property type="taxonomic scope" value="Bacteria"/>
</dbReference>
<dbReference type="HOGENOM" id="CLU_105899_2_0_5"/>
<dbReference type="OrthoDB" id="9794326at2"/>
<dbReference type="Proteomes" id="UP000000636">
    <property type="component" value="Chromosome"/>
</dbReference>
<dbReference type="GO" id="GO:0050566">
    <property type="term" value="F:asparaginyl-tRNA synthase (glutamine-hydrolyzing) activity"/>
    <property type="evidence" value="ECO:0007669"/>
    <property type="project" value="RHEA"/>
</dbReference>
<dbReference type="GO" id="GO:0005524">
    <property type="term" value="F:ATP binding"/>
    <property type="evidence" value="ECO:0007669"/>
    <property type="project" value="UniProtKB-KW"/>
</dbReference>
<dbReference type="GO" id="GO:0050567">
    <property type="term" value="F:glutaminyl-tRNA synthase (glutamine-hydrolyzing) activity"/>
    <property type="evidence" value="ECO:0007669"/>
    <property type="project" value="UniProtKB-UniRule"/>
</dbReference>
<dbReference type="GO" id="GO:0070681">
    <property type="term" value="P:glutaminyl-tRNAGln biosynthesis via transamidation"/>
    <property type="evidence" value="ECO:0007669"/>
    <property type="project" value="TreeGrafter"/>
</dbReference>
<dbReference type="GO" id="GO:0006450">
    <property type="term" value="P:regulation of translational fidelity"/>
    <property type="evidence" value="ECO:0007669"/>
    <property type="project" value="InterPro"/>
</dbReference>
<dbReference type="GO" id="GO:0006412">
    <property type="term" value="P:translation"/>
    <property type="evidence" value="ECO:0007669"/>
    <property type="project" value="UniProtKB-UniRule"/>
</dbReference>
<dbReference type="Gene3D" id="1.10.20.60">
    <property type="entry name" value="Glu-tRNAGln amidotransferase C subunit, N-terminal domain"/>
    <property type="match status" value="1"/>
</dbReference>
<dbReference type="HAMAP" id="MF_00122">
    <property type="entry name" value="GatC"/>
    <property type="match status" value="1"/>
</dbReference>
<dbReference type="InterPro" id="IPR036113">
    <property type="entry name" value="Asp/Glu-ADT_sf_sub_c"/>
</dbReference>
<dbReference type="InterPro" id="IPR003837">
    <property type="entry name" value="GatC"/>
</dbReference>
<dbReference type="NCBIfam" id="TIGR00135">
    <property type="entry name" value="gatC"/>
    <property type="match status" value="1"/>
</dbReference>
<dbReference type="PANTHER" id="PTHR15004">
    <property type="entry name" value="GLUTAMYL-TRNA(GLN) AMIDOTRANSFERASE SUBUNIT C, MITOCHONDRIAL"/>
    <property type="match status" value="1"/>
</dbReference>
<dbReference type="PANTHER" id="PTHR15004:SF0">
    <property type="entry name" value="GLUTAMYL-TRNA(GLN) AMIDOTRANSFERASE SUBUNIT C, MITOCHONDRIAL"/>
    <property type="match status" value="1"/>
</dbReference>
<dbReference type="Pfam" id="PF02686">
    <property type="entry name" value="GatC"/>
    <property type="match status" value="1"/>
</dbReference>
<dbReference type="SUPFAM" id="SSF141000">
    <property type="entry name" value="Glu-tRNAGln amidotransferase C subunit"/>
    <property type="match status" value="1"/>
</dbReference>
<comment type="function">
    <text evidence="1">Allows the formation of correctly charged Asn-tRNA(Asn) or Gln-tRNA(Gln) through the transamidation of misacylated Asp-tRNA(Asn) or Glu-tRNA(Gln) in organisms which lack either or both of asparaginyl-tRNA or glutaminyl-tRNA synthetases. The reaction takes place in the presence of glutamine and ATP through an activated phospho-Asp-tRNA(Asn) or phospho-Glu-tRNA(Gln).</text>
</comment>
<comment type="catalytic activity">
    <reaction evidence="1">
        <text>L-glutamyl-tRNA(Gln) + L-glutamine + ATP + H2O = L-glutaminyl-tRNA(Gln) + L-glutamate + ADP + phosphate + H(+)</text>
        <dbReference type="Rhea" id="RHEA:17521"/>
        <dbReference type="Rhea" id="RHEA-COMP:9681"/>
        <dbReference type="Rhea" id="RHEA-COMP:9684"/>
        <dbReference type="ChEBI" id="CHEBI:15377"/>
        <dbReference type="ChEBI" id="CHEBI:15378"/>
        <dbReference type="ChEBI" id="CHEBI:29985"/>
        <dbReference type="ChEBI" id="CHEBI:30616"/>
        <dbReference type="ChEBI" id="CHEBI:43474"/>
        <dbReference type="ChEBI" id="CHEBI:58359"/>
        <dbReference type="ChEBI" id="CHEBI:78520"/>
        <dbReference type="ChEBI" id="CHEBI:78521"/>
        <dbReference type="ChEBI" id="CHEBI:456216"/>
    </reaction>
</comment>
<comment type="catalytic activity">
    <reaction evidence="1">
        <text>L-aspartyl-tRNA(Asn) + L-glutamine + ATP + H2O = L-asparaginyl-tRNA(Asn) + L-glutamate + ADP + phosphate + 2 H(+)</text>
        <dbReference type="Rhea" id="RHEA:14513"/>
        <dbReference type="Rhea" id="RHEA-COMP:9674"/>
        <dbReference type="Rhea" id="RHEA-COMP:9677"/>
        <dbReference type="ChEBI" id="CHEBI:15377"/>
        <dbReference type="ChEBI" id="CHEBI:15378"/>
        <dbReference type="ChEBI" id="CHEBI:29985"/>
        <dbReference type="ChEBI" id="CHEBI:30616"/>
        <dbReference type="ChEBI" id="CHEBI:43474"/>
        <dbReference type="ChEBI" id="CHEBI:58359"/>
        <dbReference type="ChEBI" id="CHEBI:78515"/>
        <dbReference type="ChEBI" id="CHEBI:78516"/>
        <dbReference type="ChEBI" id="CHEBI:456216"/>
    </reaction>
</comment>
<comment type="subunit">
    <text evidence="1">Heterotrimer of A, B and C subunits.</text>
</comment>
<comment type="similarity">
    <text evidence="1">Belongs to the GatC family.</text>
</comment>
<accession>Q1GFB4</accession>
<gene>
    <name evidence="1" type="primary">gatC</name>
    <name type="ordered locus">TM1040_1919</name>
</gene>
<feature type="chain" id="PRO_1000016209" description="Aspartyl/glutamyl-tRNA(Asn/Gln) amidotransferase subunit C">
    <location>
        <begin position="1"/>
        <end position="95"/>
    </location>
</feature>